<reference key="1">
    <citation type="journal article" date="2004" name="Nat. Genet.">
        <title>Comparison of genome degradation in Paratyphi A and Typhi, human-restricted serovars of Salmonella enterica that cause typhoid.</title>
        <authorList>
            <person name="McClelland M."/>
            <person name="Sanderson K.E."/>
            <person name="Clifton S.W."/>
            <person name="Latreille P."/>
            <person name="Porwollik S."/>
            <person name="Sabo A."/>
            <person name="Meyer R."/>
            <person name="Bieri T."/>
            <person name="Ozersky P."/>
            <person name="McLellan M."/>
            <person name="Harkins C.R."/>
            <person name="Wang C."/>
            <person name="Nguyen C."/>
            <person name="Berghoff A."/>
            <person name="Elliott G."/>
            <person name="Kohlberg S."/>
            <person name="Strong C."/>
            <person name="Du F."/>
            <person name="Carter J."/>
            <person name="Kremizki C."/>
            <person name="Layman D."/>
            <person name="Leonard S."/>
            <person name="Sun H."/>
            <person name="Fulton L."/>
            <person name="Nash W."/>
            <person name="Miner T."/>
            <person name="Minx P."/>
            <person name="Delehaunty K."/>
            <person name="Fronick C."/>
            <person name="Magrini V."/>
            <person name="Nhan M."/>
            <person name="Warren W."/>
            <person name="Florea L."/>
            <person name="Spieth J."/>
            <person name="Wilson R.K."/>
        </authorList>
    </citation>
    <scope>NUCLEOTIDE SEQUENCE [LARGE SCALE GENOMIC DNA]</scope>
    <source>
        <strain>ATCC 9150 / SARB42</strain>
    </source>
</reference>
<dbReference type="EMBL" id="CP000026">
    <property type="protein sequence ID" value="AAV79954.1"/>
    <property type="molecule type" value="Genomic_DNA"/>
</dbReference>
<dbReference type="RefSeq" id="WP_000331471.1">
    <property type="nucleotide sequence ID" value="NC_006511.1"/>
</dbReference>
<dbReference type="SMR" id="Q5PJ71"/>
<dbReference type="KEGG" id="spt:SPA4218"/>
<dbReference type="HOGENOM" id="CLU_076075_2_0_6"/>
<dbReference type="Proteomes" id="UP000008185">
    <property type="component" value="Chromosome"/>
</dbReference>
<dbReference type="GO" id="GO:0005737">
    <property type="term" value="C:cytoplasm"/>
    <property type="evidence" value="ECO:0007669"/>
    <property type="project" value="UniProtKB-SubCell"/>
</dbReference>
<dbReference type="GO" id="GO:0046872">
    <property type="term" value="F:metal ion binding"/>
    <property type="evidence" value="ECO:0007669"/>
    <property type="project" value="UniProtKB-KW"/>
</dbReference>
<dbReference type="GO" id="GO:0030091">
    <property type="term" value="P:protein repair"/>
    <property type="evidence" value="ECO:0007669"/>
    <property type="project" value="UniProtKB-UniRule"/>
</dbReference>
<dbReference type="GO" id="GO:0051409">
    <property type="term" value="P:response to nitrosative stress"/>
    <property type="evidence" value="ECO:0007669"/>
    <property type="project" value="UniProtKB-UniRule"/>
</dbReference>
<dbReference type="GO" id="GO:0006979">
    <property type="term" value="P:response to oxidative stress"/>
    <property type="evidence" value="ECO:0007669"/>
    <property type="project" value="UniProtKB-UniRule"/>
</dbReference>
<dbReference type="FunFam" id="1.20.120.520:FF:000001">
    <property type="entry name" value="Iron-sulfur cluster repair protein YtfE"/>
    <property type="match status" value="1"/>
</dbReference>
<dbReference type="Gene3D" id="1.20.120.520">
    <property type="entry name" value="nmb1532 protein domain like"/>
    <property type="match status" value="1"/>
</dbReference>
<dbReference type="HAMAP" id="MF_01606">
    <property type="entry name" value="RIC_YtfE"/>
    <property type="match status" value="1"/>
</dbReference>
<dbReference type="InterPro" id="IPR023742">
    <property type="entry name" value="FeS-repair_YftE"/>
</dbReference>
<dbReference type="InterPro" id="IPR012312">
    <property type="entry name" value="Hemerythrin-like"/>
</dbReference>
<dbReference type="InterPro" id="IPR019903">
    <property type="entry name" value="RIC_family"/>
</dbReference>
<dbReference type="NCBIfam" id="TIGR03652">
    <property type="entry name" value="FeS_repair_RIC"/>
    <property type="match status" value="1"/>
</dbReference>
<dbReference type="NCBIfam" id="NF008221">
    <property type="entry name" value="PRK10992.1"/>
    <property type="match status" value="1"/>
</dbReference>
<dbReference type="PANTHER" id="PTHR36438">
    <property type="entry name" value="IRON-SULFUR CLUSTER REPAIR PROTEIN YTFE"/>
    <property type="match status" value="1"/>
</dbReference>
<dbReference type="PANTHER" id="PTHR36438:SF1">
    <property type="entry name" value="IRON-SULFUR CLUSTER REPAIR PROTEIN YTFE"/>
    <property type="match status" value="1"/>
</dbReference>
<dbReference type="Pfam" id="PF01814">
    <property type="entry name" value="Hemerythrin"/>
    <property type="match status" value="1"/>
</dbReference>
<dbReference type="Pfam" id="PF04405">
    <property type="entry name" value="ScdA_N"/>
    <property type="match status" value="1"/>
</dbReference>
<keyword id="KW-0963">Cytoplasm</keyword>
<keyword id="KW-0408">Iron</keyword>
<keyword id="KW-0479">Metal-binding</keyword>
<keyword id="KW-0346">Stress response</keyword>
<comment type="function">
    <text evidence="1">Di-iron-containing protein involved in the repair of iron-sulfur clusters damaged by oxidative and nitrosative stress conditions.</text>
</comment>
<comment type="subunit">
    <text evidence="1">Homodimer.</text>
</comment>
<comment type="subcellular location">
    <subcellularLocation>
        <location evidence="1">Cytoplasm</location>
    </subcellularLocation>
</comment>
<comment type="similarity">
    <text evidence="1">Belongs to the RIC family. YtfE subfamily.</text>
</comment>
<feature type="chain" id="PRO_0000213053" description="Iron-sulfur cluster repair protein YtfE">
    <location>
        <begin position="1"/>
        <end position="220"/>
    </location>
</feature>
<organism>
    <name type="scientific">Salmonella paratyphi A (strain ATCC 9150 / SARB42)</name>
    <dbReference type="NCBI Taxonomy" id="295319"/>
    <lineage>
        <taxon>Bacteria</taxon>
        <taxon>Pseudomonadati</taxon>
        <taxon>Pseudomonadota</taxon>
        <taxon>Gammaproteobacteria</taxon>
        <taxon>Enterobacterales</taxon>
        <taxon>Enterobacteriaceae</taxon>
        <taxon>Salmonella</taxon>
    </lineage>
</organism>
<proteinExistence type="inferred from homology"/>
<protein>
    <recommendedName>
        <fullName evidence="1">Iron-sulfur cluster repair protein YtfE</fullName>
    </recommendedName>
</protein>
<evidence type="ECO:0000255" key="1">
    <source>
        <dbReference type="HAMAP-Rule" id="MF_01606"/>
    </source>
</evidence>
<accession>Q5PJ71</accession>
<sequence length="220" mass="24911">MAYRDQPLGELALSIPRASALFRQYDMDYCCGGKQTLARAAARHDVDIDIIEAQLAQLAEQPIEKDWRAVPLADIIDHIVVRYHDRHREQLPELILQATKVERVHADKPNVPRGLTKYLTALHEELSSHMMKEEQILFPMIKQGMGRQATGPISVMESEHDEAGELVDVIKHVTQNVTPPPEACTTWKAMYNGINEMIDDLMEHISLENNVLFPRALAGE</sequence>
<name>YTFE_SALPA</name>
<gene>
    <name evidence="1" type="primary">ytfE</name>
    <name type="ordered locus">SPA4218</name>
</gene>